<protein>
    <recommendedName>
        <fullName>Lysis protein</fullName>
    </recommendedName>
</protein>
<organismHost>
    <name type="scientific">Escherichia coli</name>
    <dbReference type="NCBI Taxonomy" id="562"/>
</organismHost>
<feature type="chain" id="PRO_0000165069" description="Lysis protein">
    <location>
        <begin position="1"/>
        <end position="39" status="greater than"/>
    </location>
</feature>
<feature type="non-terminal residue">
    <location>
        <position position="39"/>
    </location>
</feature>
<proteinExistence type="predicted"/>
<name>VLYS_BPOX2</name>
<dbReference type="EMBL" id="X05675">
    <property type="protein sequence ID" value="CAA29159.1"/>
    <property type="molecule type" value="Genomic_DNA"/>
</dbReference>
<dbReference type="PIR" id="PS0063">
    <property type="entry name" value="PS0063"/>
</dbReference>
<dbReference type="GO" id="GO:0044659">
    <property type="term" value="P:viral release from host cell by cytolysis"/>
    <property type="evidence" value="ECO:0007669"/>
    <property type="project" value="InterPro"/>
</dbReference>
<dbReference type="InterPro" id="IPR020982">
    <property type="entry name" value="Phage_T4_GpT_holin"/>
</dbReference>
<dbReference type="Pfam" id="PF11031">
    <property type="entry name" value="Phage_holin_T"/>
    <property type="match status" value="1"/>
</dbReference>
<sequence>MAAPRISFSPSDILFGVLDRLFKDNATGKVLASRVAVVI</sequence>
<reference key="1">
    <citation type="journal article" date="1987" name="J. Mol. Biol.">
        <title>Receptor-recognizing proteins of T-even type bacteriophages. Constant and hypervariable regions and an unusual case of evolution.</title>
        <authorList>
            <person name="Montag D."/>
            <person name="Riede I."/>
            <person name="Eschbach M.-L."/>
            <person name="Degen M."/>
            <person name="Henning U."/>
        </authorList>
    </citation>
    <scope>NUCLEOTIDE SEQUENCE [GENOMIC DNA]</scope>
</reference>
<accession>P08230</accession>
<keyword id="KW-0204">Cytolysis</keyword>
<keyword id="KW-0578">Host cell lysis by virus</keyword>
<keyword id="KW-1188">Viral release from host cell</keyword>
<gene>
    <name type="primary">T</name>
</gene>
<organism>
    <name type="scientific">Enterobacteria phage Ox2</name>
    <name type="common">Bacteriophage Ox2</name>
    <dbReference type="NCBI Taxonomy" id="10691"/>
    <lineage>
        <taxon>Viruses</taxon>
        <taxon>Duplodnaviria</taxon>
        <taxon>Heunggongvirae</taxon>
        <taxon>Uroviricota</taxon>
        <taxon>Caudoviricetes</taxon>
        <taxon>Straboviridae</taxon>
        <taxon>Tevenvirinae</taxon>
        <taxon>Tequatrovirus</taxon>
    </lineage>
</organism>